<dbReference type="EMBL" id="CU329671">
    <property type="protein sequence ID" value="CAA18415.2"/>
    <property type="molecule type" value="Genomic_DNA"/>
</dbReference>
<dbReference type="PIR" id="T39782">
    <property type="entry name" value="T39782"/>
</dbReference>
<dbReference type="RefSeq" id="NP_595742.2">
    <property type="nucleotide sequence ID" value="NM_001021640.2"/>
</dbReference>
<dbReference type="BioGRID" id="277352">
    <property type="interactions" value="12"/>
</dbReference>
<dbReference type="STRING" id="284812.O60148"/>
<dbReference type="iPTMnet" id="O60148"/>
<dbReference type="PaxDb" id="4896-SPBC18H10.18c.1"/>
<dbReference type="EnsemblFungi" id="SPBC18H10.18c.1">
    <property type="protein sequence ID" value="SPBC18H10.18c.1:pep"/>
    <property type="gene ID" value="SPBC18H10.18c"/>
</dbReference>
<dbReference type="KEGG" id="spo:2540834"/>
<dbReference type="PomBase" id="SPBC18H10.18c"/>
<dbReference type="VEuPathDB" id="FungiDB:SPBC18H10.18c"/>
<dbReference type="HOGENOM" id="CLU_1166429_0_0_1"/>
<dbReference type="InParanoid" id="O60148"/>
<dbReference type="PRO" id="PR:O60148"/>
<dbReference type="Proteomes" id="UP000002485">
    <property type="component" value="Chromosome II"/>
</dbReference>
<dbReference type="GO" id="GO:0005737">
    <property type="term" value="C:cytoplasm"/>
    <property type="evidence" value="ECO:0007005"/>
    <property type="project" value="PomBase"/>
</dbReference>
<dbReference type="GO" id="GO:0016020">
    <property type="term" value="C:membrane"/>
    <property type="evidence" value="ECO:0007669"/>
    <property type="project" value="UniProtKB-SubCell"/>
</dbReference>
<evidence type="ECO:0000255" key="1"/>
<evidence type="ECO:0000256" key="2">
    <source>
        <dbReference type="SAM" id="MobiDB-lite"/>
    </source>
</evidence>
<evidence type="ECO:0000269" key="3">
    <source>
    </source>
</evidence>
<evidence type="ECO:0000305" key="4"/>
<gene>
    <name type="ORF">SPBC18H10.18c</name>
</gene>
<reference key="1">
    <citation type="journal article" date="2002" name="Nature">
        <title>The genome sequence of Schizosaccharomyces pombe.</title>
        <authorList>
            <person name="Wood V."/>
            <person name="Gwilliam R."/>
            <person name="Rajandream M.A."/>
            <person name="Lyne M.H."/>
            <person name="Lyne R."/>
            <person name="Stewart A."/>
            <person name="Sgouros J.G."/>
            <person name="Peat N."/>
            <person name="Hayles J."/>
            <person name="Baker S.G."/>
            <person name="Basham D."/>
            <person name="Bowman S."/>
            <person name="Brooks K."/>
            <person name="Brown D."/>
            <person name="Brown S."/>
            <person name="Chillingworth T."/>
            <person name="Churcher C.M."/>
            <person name="Collins M."/>
            <person name="Connor R."/>
            <person name="Cronin A."/>
            <person name="Davis P."/>
            <person name="Feltwell T."/>
            <person name="Fraser A."/>
            <person name="Gentles S."/>
            <person name="Goble A."/>
            <person name="Hamlin N."/>
            <person name="Harris D.E."/>
            <person name="Hidalgo J."/>
            <person name="Hodgson G."/>
            <person name="Holroyd S."/>
            <person name="Hornsby T."/>
            <person name="Howarth S."/>
            <person name="Huckle E.J."/>
            <person name="Hunt S."/>
            <person name="Jagels K."/>
            <person name="James K.D."/>
            <person name="Jones L."/>
            <person name="Jones M."/>
            <person name="Leather S."/>
            <person name="McDonald S."/>
            <person name="McLean J."/>
            <person name="Mooney P."/>
            <person name="Moule S."/>
            <person name="Mungall K.L."/>
            <person name="Murphy L.D."/>
            <person name="Niblett D."/>
            <person name="Odell C."/>
            <person name="Oliver K."/>
            <person name="O'Neil S."/>
            <person name="Pearson D."/>
            <person name="Quail M.A."/>
            <person name="Rabbinowitsch E."/>
            <person name="Rutherford K.M."/>
            <person name="Rutter S."/>
            <person name="Saunders D."/>
            <person name="Seeger K."/>
            <person name="Sharp S."/>
            <person name="Skelton J."/>
            <person name="Simmonds M.N."/>
            <person name="Squares R."/>
            <person name="Squares S."/>
            <person name="Stevens K."/>
            <person name="Taylor K."/>
            <person name="Taylor R.G."/>
            <person name="Tivey A."/>
            <person name="Walsh S.V."/>
            <person name="Warren T."/>
            <person name="Whitehead S."/>
            <person name="Woodward J.R."/>
            <person name="Volckaert G."/>
            <person name="Aert R."/>
            <person name="Robben J."/>
            <person name="Grymonprez B."/>
            <person name="Weltjens I."/>
            <person name="Vanstreels E."/>
            <person name="Rieger M."/>
            <person name="Schaefer M."/>
            <person name="Mueller-Auer S."/>
            <person name="Gabel C."/>
            <person name="Fuchs M."/>
            <person name="Duesterhoeft A."/>
            <person name="Fritzc C."/>
            <person name="Holzer E."/>
            <person name="Moestl D."/>
            <person name="Hilbert H."/>
            <person name="Borzym K."/>
            <person name="Langer I."/>
            <person name="Beck A."/>
            <person name="Lehrach H."/>
            <person name="Reinhardt R."/>
            <person name="Pohl T.M."/>
            <person name="Eger P."/>
            <person name="Zimmermann W."/>
            <person name="Wedler H."/>
            <person name="Wambutt R."/>
            <person name="Purnelle B."/>
            <person name="Goffeau A."/>
            <person name="Cadieu E."/>
            <person name="Dreano S."/>
            <person name="Gloux S."/>
            <person name="Lelaure V."/>
            <person name="Mottier S."/>
            <person name="Galibert F."/>
            <person name="Aves S.J."/>
            <person name="Xiang Z."/>
            <person name="Hunt C."/>
            <person name="Moore K."/>
            <person name="Hurst S.M."/>
            <person name="Lucas M."/>
            <person name="Rochet M."/>
            <person name="Gaillardin C."/>
            <person name="Tallada V.A."/>
            <person name="Garzon A."/>
            <person name="Thode G."/>
            <person name="Daga R.R."/>
            <person name="Cruzado L."/>
            <person name="Jimenez J."/>
            <person name="Sanchez M."/>
            <person name="del Rey F."/>
            <person name="Benito J."/>
            <person name="Dominguez A."/>
            <person name="Revuelta J.L."/>
            <person name="Moreno S."/>
            <person name="Armstrong J."/>
            <person name="Forsburg S.L."/>
            <person name="Cerutti L."/>
            <person name="Lowe T."/>
            <person name="McCombie W.R."/>
            <person name="Paulsen I."/>
            <person name="Potashkin J."/>
            <person name="Shpakovski G.V."/>
            <person name="Ussery D."/>
            <person name="Barrell B.G."/>
            <person name="Nurse P."/>
        </authorList>
    </citation>
    <scope>NUCLEOTIDE SEQUENCE [LARGE SCALE GENOMIC DNA]</scope>
    <source>
        <strain>972 / ATCC 24843</strain>
    </source>
</reference>
<reference key="2">
    <citation type="journal article" date="2006" name="Nat. Biotechnol.">
        <title>ORFeome cloning and global analysis of protein localization in the fission yeast Schizosaccharomyces pombe.</title>
        <authorList>
            <person name="Matsuyama A."/>
            <person name="Arai R."/>
            <person name="Yashiroda Y."/>
            <person name="Shirai A."/>
            <person name="Kamata A."/>
            <person name="Sekido S."/>
            <person name="Kobayashi Y."/>
            <person name="Hashimoto A."/>
            <person name="Hamamoto M."/>
            <person name="Hiraoka Y."/>
            <person name="Horinouchi S."/>
            <person name="Yoshida M."/>
        </authorList>
    </citation>
    <scope>SUBCELLULAR LOCATION [LARGE SCALE ANALYSIS]</scope>
</reference>
<name>YNSI_SCHPO</name>
<sequence length="242" mass="27092">MPDEKLPQYNEVWNDLEKGCLHSCPSYSVNNHVNNPIVKQNSTLTQPSLRKKNTMAAPARLRKRSENVRLTQARYAIFHIFLPFILTLLLYHNFYNYFDQALADLNSVVKYVIETIVLIFTYVMTVIIVYFSFSLIKLAFEEAYVYAPSVAKANEGLAKHVAKTIAGLVKYVAKAIQGLAHIILSLLLFILGLEVIEQDEETGDVEMSSMRGQAITTEPASDNTMAEGTDCNTSKDVESGSS</sequence>
<keyword id="KW-0963">Cytoplasm</keyword>
<keyword id="KW-0472">Membrane</keyword>
<keyword id="KW-1185">Reference proteome</keyword>
<keyword id="KW-0812">Transmembrane</keyword>
<keyword id="KW-1133">Transmembrane helix</keyword>
<comment type="subcellular location">
    <subcellularLocation>
        <location evidence="3">Cytoplasm</location>
    </subcellularLocation>
    <subcellularLocation>
        <location evidence="4">Membrane</location>
        <topology evidence="4">Multi-pass membrane protein</topology>
    </subcellularLocation>
</comment>
<protein>
    <recommendedName>
        <fullName>Uncharacterized membrane protein C18H10.18c</fullName>
    </recommendedName>
</protein>
<organism>
    <name type="scientific">Schizosaccharomyces pombe (strain 972 / ATCC 24843)</name>
    <name type="common">Fission yeast</name>
    <dbReference type="NCBI Taxonomy" id="284812"/>
    <lineage>
        <taxon>Eukaryota</taxon>
        <taxon>Fungi</taxon>
        <taxon>Dikarya</taxon>
        <taxon>Ascomycota</taxon>
        <taxon>Taphrinomycotina</taxon>
        <taxon>Schizosaccharomycetes</taxon>
        <taxon>Schizosaccharomycetales</taxon>
        <taxon>Schizosaccharomycetaceae</taxon>
        <taxon>Schizosaccharomyces</taxon>
    </lineage>
</organism>
<feature type="chain" id="PRO_0000304060" description="Uncharacterized membrane protein C18H10.18c">
    <location>
        <begin position="1"/>
        <end position="242"/>
    </location>
</feature>
<feature type="transmembrane region" description="Helical" evidence="1">
    <location>
        <begin position="75"/>
        <end position="95"/>
    </location>
</feature>
<feature type="transmembrane region" description="Helical" evidence="1">
    <location>
        <begin position="116"/>
        <end position="136"/>
    </location>
</feature>
<feature type="transmembrane region" description="Helical" evidence="1">
    <location>
        <begin position="176"/>
        <end position="196"/>
    </location>
</feature>
<feature type="region of interest" description="Disordered" evidence="2">
    <location>
        <begin position="204"/>
        <end position="242"/>
    </location>
</feature>
<feature type="compositionally biased region" description="Polar residues" evidence="2">
    <location>
        <begin position="210"/>
        <end position="232"/>
    </location>
</feature>
<feature type="compositionally biased region" description="Basic and acidic residues" evidence="2">
    <location>
        <begin position="233"/>
        <end position="242"/>
    </location>
</feature>
<accession>O60148</accession>
<proteinExistence type="predicted"/>